<gene>
    <name evidence="1" type="primary">lgt</name>
    <name type="ordered locus">A1C_00395</name>
</gene>
<comment type="function">
    <text evidence="1">Catalyzes the transfer of the diacylglyceryl group from phosphatidylglycerol to the sulfhydryl group of the N-terminal cysteine of a prolipoprotein, the first step in the formation of mature lipoproteins.</text>
</comment>
<comment type="catalytic activity">
    <reaction evidence="1">
        <text>L-cysteinyl-[prolipoprotein] + a 1,2-diacyl-sn-glycero-3-phospho-(1'-sn-glycerol) = an S-1,2-diacyl-sn-glyceryl-L-cysteinyl-[prolipoprotein] + sn-glycerol 1-phosphate + H(+)</text>
        <dbReference type="Rhea" id="RHEA:56712"/>
        <dbReference type="Rhea" id="RHEA-COMP:14679"/>
        <dbReference type="Rhea" id="RHEA-COMP:14680"/>
        <dbReference type="ChEBI" id="CHEBI:15378"/>
        <dbReference type="ChEBI" id="CHEBI:29950"/>
        <dbReference type="ChEBI" id="CHEBI:57685"/>
        <dbReference type="ChEBI" id="CHEBI:64716"/>
        <dbReference type="ChEBI" id="CHEBI:140658"/>
        <dbReference type="EC" id="2.5.1.145"/>
    </reaction>
</comment>
<comment type="pathway">
    <text evidence="1">Protein modification; lipoprotein biosynthesis (diacylglyceryl transfer).</text>
</comment>
<comment type="subcellular location">
    <subcellularLocation>
        <location evidence="1">Cell inner membrane</location>
        <topology evidence="1">Multi-pass membrane protein</topology>
    </subcellularLocation>
</comment>
<comment type="similarity">
    <text evidence="1">Belongs to the Lgt family.</text>
</comment>
<reference key="1">
    <citation type="submission" date="2007-09" db="EMBL/GenBank/DDBJ databases">
        <title>Complete genome sequence of Rickettsia akari.</title>
        <authorList>
            <person name="Madan A."/>
            <person name="Fahey J."/>
            <person name="Helton E."/>
            <person name="Ketteman M."/>
            <person name="Madan A."/>
            <person name="Rodrigues S."/>
            <person name="Sanchez A."/>
            <person name="Whiting M."/>
            <person name="Dasch G."/>
            <person name="Eremeeva M."/>
        </authorList>
    </citation>
    <scope>NUCLEOTIDE SEQUENCE [LARGE SCALE GENOMIC DNA]</scope>
    <source>
        <strain>Hartford</strain>
    </source>
</reference>
<protein>
    <recommendedName>
        <fullName evidence="1">Phosphatidylglycerol--prolipoprotein diacylglyceryl transferase</fullName>
        <ecNumber evidence="1">2.5.1.145</ecNumber>
    </recommendedName>
</protein>
<proteinExistence type="inferred from homology"/>
<evidence type="ECO:0000255" key="1">
    <source>
        <dbReference type="HAMAP-Rule" id="MF_01147"/>
    </source>
</evidence>
<keyword id="KW-0997">Cell inner membrane</keyword>
<keyword id="KW-1003">Cell membrane</keyword>
<keyword id="KW-0472">Membrane</keyword>
<keyword id="KW-0808">Transferase</keyword>
<keyword id="KW-0812">Transmembrane</keyword>
<keyword id="KW-1133">Transmembrane helix</keyword>
<organism>
    <name type="scientific">Rickettsia akari (strain Hartford)</name>
    <dbReference type="NCBI Taxonomy" id="293614"/>
    <lineage>
        <taxon>Bacteria</taxon>
        <taxon>Pseudomonadati</taxon>
        <taxon>Pseudomonadota</taxon>
        <taxon>Alphaproteobacteria</taxon>
        <taxon>Rickettsiales</taxon>
        <taxon>Rickettsiaceae</taxon>
        <taxon>Rickettsieae</taxon>
        <taxon>Rickettsia</taxon>
        <taxon>spotted fever group</taxon>
    </lineage>
</organism>
<accession>A8GLY7</accession>
<feature type="chain" id="PRO_1000053491" description="Phosphatidylglycerol--prolipoprotein diacylglyceryl transferase">
    <location>
        <begin position="1"/>
        <end position="259"/>
    </location>
</feature>
<feature type="transmembrane region" description="Helical" evidence="1">
    <location>
        <begin position="9"/>
        <end position="29"/>
    </location>
</feature>
<feature type="transmembrane region" description="Helical" evidence="1">
    <location>
        <begin position="55"/>
        <end position="75"/>
    </location>
</feature>
<feature type="transmembrane region" description="Helical" evidence="1">
    <location>
        <begin position="92"/>
        <end position="112"/>
    </location>
</feature>
<feature type="transmembrane region" description="Helical" evidence="1">
    <location>
        <begin position="117"/>
        <end position="137"/>
    </location>
</feature>
<feature type="transmembrane region" description="Helical" evidence="1">
    <location>
        <begin position="172"/>
        <end position="192"/>
    </location>
</feature>
<feature type="transmembrane region" description="Helical" evidence="1">
    <location>
        <begin position="201"/>
        <end position="221"/>
    </location>
</feature>
<feature type="transmembrane region" description="Helical" evidence="1">
    <location>
        <begin position="228"/>
        <end position="248"/>
    </location>
</feature>
<feature type="binding site" evidence="1">
    <location>
        <position position="138"/>
    </location>
    <ligand>
        <name>a 1,2-diacyl-sn-glycero-3-phospho-(1'-sn-glycerol)</name>
        <dbReference type="ChEBI" id="CHEBI:64716"/>
    </ligand>
</feature>
<dbReference type="EC" id="2.5.1.145" evidence="1"/>
<dbReference type="EMBL" id="CP000847">
    <property type="protein sequence ID" value="ABV74412.1"/>
    <property type="molecule type" value="Genomic_DNA"/>
</dbReference>
<dbReference type="RefSeq" id="WP_012013282.1">
    <property type="nucleotide sequence ID" value="NC_009881.1"/>
</dbReference>
<dbReference type="SMR" id="A8GLY7"/>
<dbReference type="STRING" id="293614.A1C_00395"/>
<dbReference type="KEGG" id="rak:A1C_00395"/>
<dbReference type="eggNOG" id="COG0682">
    <property type="taxonomic scope" value="Bacteria"/>
</dbReference>
<dbReference type="HOGENOM" id="CLU_013386_1_0_5"/>
<dbReference type="UniPathway" id="UPA00664"/>
<dbReference type="Proteomes" id="UP000006830">
    <property type="component" value="Chromosome"/>
</dbReference>
<dbReference type="GO" id="GO:0005886">
    <property type="term" value="C:plasma membrane"/>
    <property type="evidence" value="ECO:0007669"/>
    <property type="project" value="UniProtKB-SubCell"/>
</dbReference>
<dbReference type="GO" id="GO:0008961">
    <property type="term" value="F:phosphatidylglycerol-prolipoprotein diacylglyceryl transferase activity"/>
    <property type="evidence" value="ECO:0007669"/>
    <property type="project" value="UniProtKB-UniRule"/>
</dbReference>
<dbReference type="GO" id="GO:0042158">
    <property type="term" value="P:lipoprotein biosynthetic process"/>
    <property type="evidence" value="ECO:0007669"/>
    <property type="project" value="UniProtKB-UniRule"/>
</dbReference>
<dbReference type="HAMAP" id="MF_01147">
    <property type="entry name" value="Lgt"/>
    <property type="match status" value="1"/>
</dbReference>
<dbReference type="InterPro" id="IPR001640">
    <property type="entry name" value="Lgt"/>
</dbReference>
<dbReference type="NCBIfam" id="TIGR00544">
    <property type="entry name" value="lgt"/>
    <property type="match status" value="1"/>
</dbReference>
<dbReference type="PANTHER" id="PTHR30589:SF0">
    <property type="entry name" value="PHOSPHATIDYLGLYCEROL--PROLIPOPROTEIN DIACYLGLYCERYL TRANSFERASE"/>
    <property type="match status" value="1"/>
</dbReference>
<dbReference type="PANTHER" id="PTHR30589">
    <property type="entry name" value="PROLIPOPROTEIN DIACYLGLYCERYL TRANSFERASE"/>
    <property type="match status" value="1"/>
</dbReference>
<dbReference type="Pfam" id="PF01790">
    <property type="entry name" value="LGT"/>
    <property type="match status" value="1"/>
</dbReference>
<dbReference type="PROSITE" id="PS01311">
    <property type="entry name" value="LGT"/>
    <property type="match status" value="1"/>
</dbReference>
<sequence length="259" mass="29184">MTFPNINPIIFYLGPLAISWYSLSYVVGILLSWFYANKIIEKFKPQINKKTLEDFITYAVIGIIVGGRLGFVLLYNPSRYFLHPIDILKTYEGGMSFHGGALGVIIAAYLFCRKYKVNFLSLTDIIAAVVPIGLFLGRIANFINGELYGRITNASFGMIFPNSDLMPRHPSQLYEAFFEGLVLFCILAYATFKNKTLKNCGLNSGLFLTFYALFRIAIEIFREPDIQIGFILDNLTMGQILSVPMLILGSYLICQSNPK</sequence>
<name>LGT_RICAH</name>